<name>Y619_TREPA</name>
<dbReference type="EMBL" id="AE000520">
    <property type="protein sequence ID" value="AAC65602.1"/>
    <property type="molecule type" value="Genomic_DNA"/>
</dbReference>
<dbReference type="PIR" id="D71301">
    <property type="entry name" value="D71301"/>
</dbReference>
<dbReference type="IntAct" id="O83628">
    <property type="interactions" value="2"/>
</dbReference>
<dbReference type="STRING" id="243276.TP_0619"/>
<dbReference type="EnsemblBacteria" id="AAC65602">
    <property type="protein sequence ID" value="AAC65602"/>
    <property type="gene ID" value="TP_0619"/>
</dbReference>
<dbReference type="KEGG" id="tpa:TP_0619"/>
<dbReference type="KEGG" id="tpw:TPANIC_0619"/>
<dbReference type="HOGENOM" id="CLU_091716_0_0_12"/>
<dbReference type="Proteomes" id="UP000000811">
    <property type="component" value="Chromosome"/>
</dbReference>
<dbReference type="InterPro" id="IPR024471">
    <property type="entry name" value="DUF2715"/>
</dbReference>
<dbReference type="Pfam" id="PF10895">
    <property type="entry name" value="DUF2715"/>
    <property type="match status" value="1"/>
</dbReference>
<organism>
    <name type="scientific">Treponema pallidum (strain Nichols)</name>
    <dbReference type="NCBI Taxonomy" id="243276"/>
    <lineage>
        <taxon>Bacteria</taxon>
        <taxon>Pseudomonadati</taxon>
        <taxon>Spirochaetota</taxon>
        <taxon>Spirochaetia</taxon>
        <taxon>Spirochaetales</taxon>
        <taxon>Treponemataceae</taxon>
        <taxon>Treponema</taxon>
    </lineage>
</organism>
<sequence>MRGCRVGQRTGTVGVRVFPVGLCALSLQARDCRGMCGKRLGKVMVLGCMLPGVAARVSLSPKLGVYGDARGGSDLWGICIQAPTMPDTENQAPPRYAPETPLVGLDVAFRAENGFLLQLTVDAALTRLMFCGRCLAGYSFRPGEGSTHLSVAAGFECTALIYDSQHFLSVLGQGLLQPSSSSYSAGNWHRPRSLLGVLTCTAKEVGAIHEESRIKGVCQNYAVPVQLGVQHYFGAHWGIDATATVSFGIDTKLAKFRIPYTLRVGPVFRT</sequence>
<feature type="chain" id="PRO_0000202290" description="Uncharacterized protein TP_0619">
    <location>
        <begin position="1"/>
        <end position="270"/>
    </location>
</feature>
<comment type="similarity">
    <text evidence="1">To T.pallidum TP_0127, TP_0315 and TP_0618.</text>
</comment>
<protein>
    <recommendedName>
        <fullName>Uncharacterized protein TP_0619</fullName>
    </recommendedName>
</protein>
<evidence type="ECO:0000305" key="1"/>
<gene>
    <name type="ordered locus">TP_0619</name>
</gene>
<proteinExistence type="predicted"/>
<reference key="1">
    <citation type="journal article" date="1998" name="Science">
        <title>Complete genome sequence of Treponema pallidum, the syphilis spirochete.</title>
        <authorList>
            <person name="Fraser C.M."/>
            <person name="Norris S.J."/>
            <person name="Weinstock G.M."/>
            <person name="White O."/>
            <person name="Sutton G.G."/>
            <person name="Dodson R.J."/>
            <person name="Gwinn M.L."/>
            <person name="Hickey E.K."/>
            <person name="Clayton R.A."/>
            <person name="Ketchum K.A."/>
            <person name="Sodergren E."/>
            <person name="Hardham J.M."/>
            <person name="McLeod M.P."/>
            <person name="Salzberg S.L."/>
            <person name="Peterson J.D."/>
            <person name="Khalak H.G."/>
            <person name="Richardson D.L."/>
            <person name="Howell J.K."/>
            <person name="Chidambaram M."/>
            <person name="Utterback T.R."/>
            <person name="McDonald L.A."/>
            <person name="Artiach P."/>
            <person name="Bowman C."/>
            <person name="Cotton M.D."/>
            <person name="Fujii C."/>
            <person name="Garland S.A."/>
            <person name="Hatch B."/>
            <person name="Horst K."/>
            <person name="Roberts K.M."/>
            <person name="Sandusky M."/>
            <person name="Weidman J.F."/>
            <person name="Smith H.O."/>
            <person name="Venter J.C."/>
        </authorList>
    </citation>
    <scope>NUCLEOTIDE SEQUENCE [LARGE SCALE GENOMIC DNA]</scope>
    <source>
        <strain>Nichols</strain>
    </source>
</reference>
<keyword id="KW-1185">Reference proteome</keyword>
<accession>O83628</accession>